<proteinExistence type="inferred from homology"/>
<keyword id="KW-0028">Amino-acid biosynthesis</keyword>
<keyword id="KW-0963">Cytoplasm</keyword>
<keyword id="KW-0368">Histidine biosynthesis</keyword>
<dbReference type="EMBL" id="CP000440">
    <property type="protein sequence ID" value="ABI87296.1"/>
    <property type="molecule type" value="Genomic_DNA"/>
</dbReference>
<dbReference type="RefSeq" id="WP_006755321.1">
    <property type="nucleotide sequence ID" value="NZ_CP009798.1"/>
</dbReference>
<dbReference type="SMR" id="Q0BEX7"/>
<dbReference type="KEGG" id="bam:Bamb_1740"/>
<dbReference type="PATRIC" id="fig|339670.21.peg.3221"/>
<dbReference type="eggNOG" id="COG3705">
    <property type="taxonomic scope" value="Bacteria"/>
</dbReference>
<dbReference type="UniPathway" id="UPA00031">
    <property type="reaction ID" value="UER00006"/>
</dbReference>
<dbReference type="Proteomes" id="UP000000662">
    <property type="component" value="Chromosome 1"/>
</dbReference>
<dbReference type="GO" id="GO:0005737">
    <property type="term" value="C:cytoplasm"/>
    <property type="evidence" value="ECO:0007669"/>
    <property type="project" value="UniProtKB-SubCell"/>
</dbReference>
<dbReference type="GO" id="GO:0004821">
    <property type="term" value="F:histidine-tRNA ligase activity"/>
    <property type="evidence" value="ECO:0007669"/>
    <property type="project" value="TreeGrafter"/>
</dbReference>
<dbReference type="GO" id="GO:0006427">
    <property type="term" value="P:histidyl-tRNA aminoacylation"/>
    <property type="evidence" value="ECO:0007669"/>
    <property type="project" value="TreeGrafter"/>
</dbReference>
<dbReference type="GO" id="GO:0000105">
    <property type="term" value="P:L-histidine biosynthetic process"/>
    <property type="evidence" value="ECO:0007669"/>
    <property type="project" value="UniProtKB-UniRule"/>
</dbReference>
<dbReference type="CDD" id="cd00773">
    <property type="entry name" value="HisRS-like_core"/>
    <property type="match status" value="1"/>
</dbReference>
<dbReference type="Gene3D" id="3.30.930.10">
    <property type="entry name" value="Bira Bifunctional Protein, Domain 2"/>
    <property type="match status" value="1"/>
</dbReference>
<dbReference type="HAMAP" id="MF_00125">
    <property type="entry name" value="HisZ"/>
    <property type="match status" value="1"/>
</dbReference>
<dbReference type="InterPro" id="IPR045864">
    <property type="entry name" value="aa-tRNA-synth_II/BPL/LPL"/>
</dbReference>
<dbReference type="InterPro" id="IPR041715">
    <property type="entry name" value="HisRS-like_core"/>
</dbReference>
<dbReference type="InterPro" id="IPR004516">
    <property type="entry name" value="HisRS/HisZ"/>
</dbReference>
<dbReference type="InterPro" id="IPR004517">
    <property type="entry name" value="HisZ"/>
</dbReference>
<dbReference type="NCBIfam" id="TIGR00443">
    <property type="entry name" value="hisZ_biosyn_reg"/>
    <property type="match status" value="1"/>
</dbReference>
<dbReference type="NCBIfam" id="NF008935">
    <property type="entry name" value="PRK12292.1-1"/>
    <property type="match status" value="1"/>
</dbReference>
<dbReference type="NCBIfam" id="NF009086">
    <property type="entry name" value="PRK12421.1"/>
    <property type="match status" value="1"/>
</dbReference>
<dbReference type="PANTHER" id="PTHR43707:SF1">
    <property type="entry name" value="HISTIDINE--TRNA LIGASE, MITOCHONDRIAL-RELATED"/>
    <property type="match status" value="1"/>
</dbReference>
<dbReference type="PANTHER" id="PTHR43707">
    <property type="entry name" value="HISTIDYL-TRNA SYNTHETASE"/>
    <property type="match status" value="1"/>
</dbReference>
<dbReference type="Pfam" id="PF13393">
    <property type="entry name" value="tRNA-synt_His"/>
    <property type="match status" value="1"/>
</dbReference>
<dbReference type="PIRSF" id="PIRSF001549">
    <property type="entry name" value="His-tRNA_synth"/>
    <property type="match status" value="1"/>
</dbReference>
<dbReference type="SUPFAM" id="SSF55681">
    <property type="entry name" value="Class II aaRS and biotin synthetases"/>
    <property type="match status" value="1"/>
</dbReference>
<comment type="function">
    <text evidence="1">Required for the first step of histidine biosynthesis. May allow the feedback regulation of ATP phosphoribosyltransferase activity by histidine.</text>
</comment>
<comment type="pathway">
    <text evidence="1">Amino-acid biosynthesis; L-histidine biosynthesis; L-histidine from 5-phospho-alpha-D-ribose 1-diphosphate: step 1/9.</text>
</comment>
<comment type="subunit">
    <text evidence="1">Heteromultimer composed of HisG and HisZ subunits.</text>
</comment>
<comment type="subcellular location">
    <subcellularLocation>
        <location evidence="1">Cytoplasm</location>
    </subcellularLocation>
</comment>
<comment type="miscellaneous">
    <text>This function is generally fulfilled by the C-terminal part of HisG, which is missing in some bacteria such as this one.</text>
</comment>
<comment type="similarity">
    <text evidence="1">Belongs to the class-II aminoacyl-tRNA synthetase family. HisZ subfamily.</text>
</comment>
<name>HISZ_BURCM</name>
<reference key="1">
    <citation type="submission" date="2006-08" db="EMBL/GenBank/DDBJ databases">
        <title>Complete sequence of chromosome 1 of Burkholderia cepacia AMMD.</title>
        <authorList>
            <person name="Copeland A."/>
            <person name="Lucas S."/>
            <person name="Lapidus A."/>
            <person name="Barry K."/>
            <person name="Detter J.C."/>
            <person name="Glavina del Rio T."/>
            <person name="Hammon N."/>
            <person name="Israni S."/>
            <person name="Pitluck S."/>
            <person name="Bruce D."/>
            <person name="Chain P."/>
            <person name="Malfatti S."/>
            <person name="Shin M."/>
            <person name="Vergez L."/>
            <person name="Schmutz J."/>
            <person name="Larimer F."/>
            <person name="Land M."/>
            <person name="Hauser L."/>
            <person name="Kyrpides N."/>
            <person name="Kim E."/>
            <person name="Parke J."/>
            <person name="Coenye T."/>
            <person name="Konstantinidis K."/>
            <person name="Ramette A."/>
            <person name="Tiedje J."/>
            <person name="Richardson P."/>
        </authorList>
    </citation>
    <scope>NUCLEOTIDE SEQUENCE [LARGE SCALE GENOMIC DNA]</scope>
    <source>
        <strain>ATCC BAA-244 / DSM 16087 / CCUG 44356 / LMG 19182 / AMMD</strain>
    </source>
</reference>
<evidence type="ECO:0000255" key="1">
    <source>
        <dbReference type="HAMAP-Rule" id="MF_00125"/>
    </source>
</evidence>
<accession>Q0BEX7</accession>
<gene>
    <name evidence="1" type="primary">hisZ</name>
    <name type="ordered locus">Bamb_1740</name>
</gene>
<organism>
    <name type="scientific">Burkholderia ambifaria (strain ATCC BAA-244 / DSM 16087 / CCUG 44356 / LMG 19182 / AMMD)</name>
    <name type="common">Burkholderia cepacia (strain AMMD)</name>
    <dbReference type="NCBI Taxonomy" id="339670"/>
    <lineage>
        <taxon>Bacteria</taxon>
        <taxon>Pseudomonadati</taxon>
        <taxon>Pseudomonadota</taxon>
        <taxon>Betaproteobacteria</taxon>
        <taxon>Burkholderiales</taxon>
        <taxon>Burkholderiaceae</taxon>
        <taxon>Burkholderia</taxon>
        <taxon>Burkholderia cepacia complex</taxon>
    </lineage>
</organism>
<protein>
    <recommendedName>
        <fullName evidence="1">ATP phosphoribosyltransferase regulatory subunit</fullName>
    </recommendedName>
</protein>
<feature type="chain" id="PRO_1000016249" description="ATP phosphoribosyltransferase regulatory subunit">
    <location>
        <begin position="1"/>
        <end position="382"/>
    </location>
</feature>
<sequence length="382" mass="41654">MSTWLLPENIADVLPSEARKIEELRRRLLDRFRSYGYEMVMPPLLEYLESLLTSGGADLRLRTFKLVDQLSGRTLGLRADITPQVARIDAHLLNRQGVTRLCYAGHVMHTRPRGLHATREQIQIGAEIYGHAGLEADLEIQQLMLDALHLAGLSRIRLDLCHAGVLAALLARDAQAAERGESLYDALSGKDVPLLNELTDDLGADTRAALRALPHLYGDASVLDEARARLPVLPEITRALDDLAQLAAQAKGVEVAIDLADLRGYAYHSGAMFTAYIDGVPNAIARGGRYDHVGQAYGRARPATGFSLDLRELARISPIEARGTAILAPWAQDDALGAAVAALRDAGEVVIQALPGHDHVLDEFACDRSLVERNGAWVVEPR</sequence>